<feature type="chain" id="PRO_0000227133" description="Anthranilate phosphoribosyltransferase">
    <location>
        <begin position="1"/>
        <end position="341"/>
    </location>
</feature>
<feature type="binding site" evidence="1">
    <location>
        <position position="80"/>
    </location>
    <ligand>
        <name>5-phospho-alpha-D-ribose 1-diphosphate</name>
        <dbReference type="ChEBI" id="CHEBI:58017"/>
    </ligand>
</feature>
<feature type="binding site" evidence="1">
    <location>
        <position position="80"/>
    </location>
    <ligand>
        <name>anthranilate</name>
        <dbReference type="ChEBI" id="CHEBI:16567"/>
        <label>1</label>
    </ligand>
</feature>
<feature type="binding site" evidence="1">
    <location>
        <begin position="83"/>
        <end position="84"/>
    </location>
    <ligand>
        <name>5-phospho-alpha-D-ribose 1-diphosphate</name>
        <dbReference type="ChEBI" id="CHEBI:58017"/>
    </ligand>
</feature>
<feature type="binding site" evidence="1">
    <location>
        <position position="88"/>
    </location>
    <ligand>
        <name>5-phospho-alpha-D-ribose 1-diphosphate</name>
        <dbReference type="ChEBI" id="CHEBI:58017"/>
    </ligand>
</feature>
<feature type="binding site" evidence="1">
    <location>
        <begin position="90"/>
        <end position="93"/>
    </location>
    <ligand>
        <name>5-phospho-alpha-D-ribose 1-diphosphate</name>
        <dbReference type="ChEBI" id="CHEBI:58017"/>
    </ligand>
</feature>
<feature type="binding site" evidence="1">
    <location>
        <position position="92"/>
    </location>
    <ligand>
        <name>Mg(2+)</name>
        <dbReference type="ChEBI" id="CHEBI:18420"/>
        <label>1</label>
    </ligand>
</feature>
<feature type="binding site" evidence="1">
    <location>
        <begin position="108"/>
        <end position="116"/>
    </location>
    <ligand>
        <name>5-phospho-alpha-D-ribose 1-diphosphate</name>
        <dbReference type="ChEBI" id="CHEBI:58017"/>
    </ligand>
</feature>
<feature type="binding site" evidence="1">
    <location>
        <position position="111"/>
    </location>
    <ligand>
        <name>anthranilate</name>
        <dbReference type="ChEBI" id="CHEBI:16567"/>
        <label>1</label>
    </ligand>
</feature>
<feature type="binding site" evidence="1">
    <location>
        <position position="120"/>
    </location>
    <ligand>
        <name>5-phospho-alpha-D-ribose 1-diphosphate</name>
        <dbReference type="ChEBI" id="CHEBI:58017"/>
    </ligand>
</feature>
<feature type="binding site" evidence="1">
    <location>
        <position position="166"/>
    </location>
    <ligand>
        <name>anthranilate</name>
        <dbReference type="ChEBI" id="CHEBI:16567"/>
        <label>2</label>
    </ligand>
</feature>
<feature type="binding site" evidence="1">
    <location>
        <position position="225"/>
    </location>
    <ligand>
        <name>Mg(2+)</name>
        <dbReference type="ChEBI" id="CHEBI:18420"/>
        <label>2</label>
    </ligand>
</feature>
<feature type="binding site" evidence="1">
    <location>
        <position position="226"/>
    </location>
    <ligand>
        <name>Mg(2+)</name>
        <dbReference type="ChEBI" id="CHEBI:18420"/>
        <label>1</label>
    </ligand>
</feature>
<feature type="binding site" evidence="1">
    <location>
        <position position="226"/>
    </location>
    <ligand>
        <name>Mg(2+)</name>
        <dbReference type="ChEBI" id="CHEBI:18420"/>
        <label>2</label>
    </ligand>
</feature>
<accession>Q5WGS4</accession>
<protein>
    <recommendedName>
        <fullName evidence="1">Anthranilate phosphoribosyltransferase</fullName>
        <ecNumber evidence="1">2.4.2.18</ecNumber>
    </recommendedName>
</protein>
<dbReference type="EC" id="2.4.2.18" evidence="1"/>
<dbReference type="EMBL" id="AP006627">
    <property type="protein sequence ID" value="BAD64431.1"/>
    <property type="molecule type" value="Genomic_DNA"/>
</dbReference>
<dbReference type="RefSeq" id="WP_011246739.1">
    <property type="nucleotide sequence ID" value="NC_006582.1"/>
</dbReference>
<dbReference type="SMR" id="Q5WGS4"/>
<dbReference type="STRING" id="66692.ABC1896"/>
<dbReference type="KEGG" id="bcl:ABC1896"/>
<dbReference type="eggNOG" id="COG0547">
    <property type="taxonomic scope" value="Bacteria"/>
</dbReference>
<dbReference type="HOGENOM" id="CLU_034315_2_1_9"/>
<dbReference type="OrthoDB" id="9806430at2"/>
<dbReference type="UniPathway" id="UPA00035">
    <property type="reaction ID" value="UER00041"/>
</dbReference>
<dbReference type="Proteomes" id="UP000001168">
    <property type="component" value="Chromosome"/>
</dbReference>
<dbReference type="GO" id="GO:0005829">
    <property type="term" value="C:cytosol"/>
    <property type="evidence" value="ECO:0007669"/>
    <property type="project" value="TreeGrafter"/>
</dbReference>
<dbReference type="GO" id="GO:0004048">
    <property type="term" value="F:anthranilate phosphoribosyltransferase activity"/>
    <property type="evidence" value="ECO:0007669"/>
    <property type="project" value="UniProtKB-UniRule"/>
</dbReference>
<dbReference type="GO" id="GO:0000287">
    <property type="term" value="F:magnesium ion binding"/>
    <property type="evidence" value="ECO:0007669"/>
    <property type="project" value="UniProtKB-UniRule"/>
</dbReference>
<dbReference type="GO" id="GO:0000162">
    <property type="term" value="P:L-tryptophan biosynthetic process"/>
    <property type="evidence" value="ECO:0007669"/>
    <property type="project" value="UniProtKB-UniRule"/>
</dbReference>
<dbReference type="FunFam" id="3.40.1030.10:FF:000002">
    <property type="entry name" value="Anthranilate phosphoribosyltransferase"/>
    <property type="match status" value="1"/>
</dbReference>
<dbReference type="Gene3D" id="3.40.1030.10">
    <property type="entry name" value="Nucleoside phosphorylase/phosphoribosyltransferase catalytic domain"/>
    <property type="match status" value="1"/>
</dbReference>
<dbReference type="Gene3D" id="1.20.970.10">
    <property type="entry name" value="Transferase, Pyrimidine Nucleoside Phosphorylase, Chain C"/>
    <property type="match status" value="1"/>
</dbReference>
<dbReference type="HAMAP" id="MF_00211">
    <property type="entry name" value="TrpD"/>
    <property type="match status" value="1"/>
</dbReference>
<dbReference type="InterPro" id="IPR005940">
    <property type="entry name" value="Anthranilate_Pribosyl_Tfrase"/>
</dbReference>
<dbReference type="InterPro" id="IPR000312">
    <property type="entry name" value="Glycosyl_Trfase_fam3"/>
</dbReference>
<dbReference type="InterPro" id="IPR017459">
    <property type="entry name" value="Glycosyl_Trfase_fam3_N_dom"/>
</dbReference>
<dbReference type="InterPro" id="IPR036320">
    <property type="entry name" value="Glycosyl_Trfase_fam3_N_dom_sf"/>
</dbReference>
<dbReference type="InterPro" id="IPR035902">
    <property type="entry name" value="Nuc_phospho_transferase"/>
</dbReference>
<dbReference type="NCBIfam" id="TIGR01245">
    <property type="entry name" value="trpD"/>
    <property type="match status" value="1"/>
</dbReference>
<dbReference type="PANTHER" id="PTHR43285">
    <property type="entry name" value="ANTHRANILATE PHOSPHORIBOSYLTRANSFERASE"/>
    <property type="match status" value="1"/>
</dbReference>
<dbReference type="PANTHER" id="PTHR43285:SF2">
    <property type="entry name" value="ANTHRANILATE PHOSPHORIBOSYLTRANSFERASE"/>
    <property type="match status" value="1"/>
</dbReference>
<dbReference type="Pfam" id="PF02885">
    <property type="entry name" value="Glycos_trans_3N"/>
    <property type="match status" value="1"/>
</dbReference>
<dbReference type="Pfam" id="PF00591">
    <property type="entry name" value="Glycos_transf_3"/>
    <property type="match status" value="1"/>
</dbReference>
<dbReference type="SUPFAM" id="SSF52418">
    <property type="entry name" value="Nucleoside phosphorylase/phosphoribosyltransferase catalytic domain"/>
    <property type="match status" value="1"/>
</dbReference>
<dbReference type="SUPFAM" id="SSF47648">
    <property type="entry name" value="Nucleoside phosphorylase/phosphoribosyltransferase N-terminal domain"/>
    <property type="match status" value="1"/>
</dbReference>
<name>TRPD_SHOC1</name>
<keyword id="KW-0028">Amino-acid biosynthesis</keyword>
<keyword id="KW-0057">Aromatic amino acid biosynthesis</keyword>
<keyword id="KW-0328">Glycosyltransferase</keyword>
<keyword id="KW-0460">Magnesium</keyword>
<keyword id="KW-0479">Metal-binding</keyword>
<keyword id="KW-1185">Reference proteome</keyword>
<keyword id="KW-0808">Transferase</keyword>
<keyword id="KW-0822">Tryptophan biosynthesis</keyword>
<gene>
    <name evidence="1" type="primary">trpD</name>
    <name type="ordered locus">ABC1896</name>
</gene>
<sequence>MMKHVLNKCLMGESLSVQEAEQVMEQIMSGRATASQVASLITMMRVRGETAEEILGFAKGMRAYARKFPAVIEGTIDTCGTGGDGLGTFNISTASALVLASLGVPVAKHGNRSVSSKSGSADVLEELGINIQASVEEACQMLETTNLCFLFAPLYHQSMRHVAGPRKEIGFRTIFNLLGPLTNPAGARYQLLGVYDEAAALKMGEALRQLGSEHSLLVTGADGLDECAIHGDTHVVEVKDGRCETYRFSPDDVGLPLGNLADIQVDTPAESAALIRAIFSGDGPQAAKNIVALNAGAALYACGNASHIAEGVHYASKAIESKRVFRYLQSLQQQGRGIKHA</sequence>
<organism>
    <name type="scientific">Shouchella clausii (strain KSM-K16)</name>
    <name type="common">Alkalihalobacillus clausii</name>
    <dbReference type="NCBI Taxonomy" id="66692"/>
    <lineage>
        <taxon>Bacteria</taxon>
        <taxon>Bacillati</taxon>
        <taxon>Bacillota</taxon>
        <taxon>Bacilli</taxon>
        <taxon>Bacillales</taxon>
        <taxon>Bacillaceae</taxon>
        <taxon>Shouchella</taxon>
    </lineage>
</organism>
<evidence type="ECO:0000255" key="1">
    <source>
        <dbReference type="HAMAP-Rule" id="MF_00211"/>
    </source>
</evidence>
<reference key="1">
    <citation type="submission" date="2003-10" db="EMBL/GenBank/DDBJ databases">
        <title>The complete genome sequence of the alkaliphilic Bacillus clausii KSM-K16.</title>
        <authorList>
            <person name="Takaki Y."/>
            <person name="Kageyama Y."/>
            <person name="Shimamura S."/>
            <person name="Suzuki H."/>
            <person name="Nishi S."/>
            <person name="Hatada Y."/>
            <person name="Kawai S."/>
            <person name="Ito S."/>
            <person name="Horikoshi K."/>
        </authorList>
    </citation>
    <scope>NUCLEOTIDE SEQUENCE [LARGE SCALE GENOMIC DNA]</scope>
    <source>
        <strain>KSM-K16</strain>
    </source>
</reference>
<comment type="function">
    <text evidence="1">Catalyzes the transfer of the phosphoribosyl group of 5-phosphorylribose-1-pyrophosphate (PRPP) to anthranilate to yield N-(5'-phosphoribosyl)-anthranilate (PRA).</text>
</comment>
<comment type="catalytic activity">
    <reaction evidence="1">
        <text>N-(5-phospho-beta-D-ribosyl)anthranilate + diphosphate = 5-phospho-alpha-D-ribose 1-diphosphate + anthranilate</text>
        <dbReference type="Rhea" id="RHEA:11768"/>
        <dbReference type="ChEBI" id="CHEBI:16567"/>
        <dbReference type="ChEBI" id="CHEBI:18277"/>
        <dbReference type="ChEBI" id="CHEBI:33019"/>
        <dbReference type="ChEBI" id="CHEBI:58017"/>
        <dbReference type="EC" id="2.4.2.18"/>
    </reaction>
</comment>
<comment type="cofactor">
    <cofactor evidence="1">
        <name>Mg(2+)</name>
        <dbReference type="ChEBI" id="CHEBI:18420"/>
    </cofactor>
    <text evidence="1">Binds 2 magnesium ions per monomer.</text>
</comment>
<comment type="pathway">
    <text evidence="1">Amino-acid biosynthesis; L-tryptophan biosynthesis; L-tryptophan from chorismate: step 2/5.</text>
</comment>
<comment type="subunit">
    <text evidence="1">Homodimer.</text>
</comment>
<comment type="similarity">
    <text evidence="1">Belongs to the anthranilate phosphoribosyltransferase family.</text>
</comment>
<proteinExistence type="inferred from homology"/>